<feature type="chain" id="PRO_1000097211" description="Phosphoserine aminotransferase">
    <location>
        <begin position="1"/>
        <end position="360"/>
    </location>
</feature>
<feature type="binding site" evidence="1">
    <location>
        <position position="42"/>
    </location>
    <ligand>
        <name>L-glutamate</name>
        <dbReference type="ChEBI" id="CHEBI:29985"/>
    </ligand>
</feature>
<feature type="binding site" evidence="1">
    <location>
        <position position="102"/>
    </location>
    <ligand>
        <name>pyridoxal 5'-phosphate</name>
        <dbReference type="ChEBI" id="CHEBI:597326"/>
    </ligand>
</feature>
<feature type="binding site" evidence="1">
    <location>
        <position position="152"/>
    </location>
    <ligand>
        <name>pyridoxal 5'-phosphate</name>
        <dbReference type="ChEBI" id="CHEBI:597326"/>
    </ligand>
</feature>
<feature type="binding site" evidence="1">
    <location>
        <position position="171"/>
    </location>
    <ligand>
        <name>pyridoxal 5'-phosphate</name>
        <dbReference type="ChEBI" id="CHEBI:597326"/>
    </ligand>
</feature>
<feature type="binding site" evidence="1">
    <location>
        <position position="194"/>
    </location>
    <ligand>
        <name>pyridoxal 5'-phosphate</name>
        <dbReference type="ChEBI" id="CHEBI:597326"/>
    </ligand>
</feature>
<feature type="binding site" evidence="1">
    <location>
        <begin position="237"/>
        <end position="238"/>
    </location>
    <ligand>
        <name>pyridoxal 5'-phosphate</name>
        <dbReference type="ChEBI" id="CHEBI:597326"/>
    </ligand>
</feature>
<feature type="modified residue" description="N6-(pyridoxal phosphate)lysine" evidence="1">
    <location>
        <position position="195"/>
    </location>
</feature>
<organism>
    <name type="scientific">Coxiella burnetii (strain CbuG_Q212)</name>
    <name type="common">Coxiella burnetii (strain Q212)</name>
    <dbReference type="NCBI Taxonomy" id="434923"/>
    <lineage>
        <taxon>Bacteria</taxon>
        <taxon>Pseudomonadati</taxon>
        <taxon>Pseudomonadota</taxon>
        <taxon>Gammaproteobacteria</taxon>
        <taxon>Legionellales</taxon>
        <taxon>Coxiellaceae</taxon>
        <taxon>Coxiella</taxon>
    </lineage>
</organism>
<reference key="1">
    <citation type="journal article" date="2009" name="Infect. Immun.">
        <title>Comparative genomics reveal extensive transposon-mediated genomic plasticity and diversity among potential effector proteins within the genus Coxiella.</title>
        <authorList>
            <person name="Beare P.A."/>
            <person name="Unsworth N."/>
            <person name="Andoh M."/>
            <person name="Voth D.E."/>
            <person name="Omsland A."/>
            <person name="Gilk S.D."/>
            <person name="Williams K.P."/>
            <person name="Sobral B.W."/>
            <person name="Kupko J.J. III"/>
            <person name="Porcella S.F."/>
            <person name="Samuel J.E."/>
            <person name="Heinzen R.A."/>
        </authorList>
    </citation>
    <scope>NUCLEOTIDE SEQUENCE [LARGE SCALE GENOMIC DNA]</scope>
    <source>
        <strain>CbuG_Q212</strain>
    </source>
</reference>
<keyword id="KW-0028">Amino-acid biosynthesis</keyword>
<keyword id="KW-0032">Aminotransferase</keyword>
<keyword id="KW-0963">Cytoplasm</keyword>
<keyword id="KW-0663">Pyridoxal phosphate</keyword>
<keyword id="KW-0664">Pyridoxine biosynthesis</keyword>
<keyword id="KW-0718">Serine biosynthesis</keyword>
<keyword id="KW-0808">Transferase</keyword>
<evidence type="ECO:0000255" key="1">
    <source>
        <dbReference type="HAMAP-Rule" id="MF_00160"/>
    </source>
</evidence>
<gene>
    <name evidence="1" type="primary">serC</name>
    <name type="ordered locus">CbuG_1469</name>
</gene>
<proteinExistence type="inferred from homology"/>
<name>SERC_COXB2</name>
<protein>
    <recommendedName>
        <fullName evidence="1">Phosphoserine aminotransferase</fullName>
        <ecNumber evidence="1">2.6.1.52</ecNumber>
    </recommendedName>
    <alternativeName>
        <fullName evidence="1">Phosphohydroxythreonine aminotransferase</fullName>
        <shortName evidence="1">PSAT</shortName>
    </alternativeName>
</protein>
<comment type="function">
    <text evidence="1">Catalyzes the reversible conversion of 3-phosphohydroxypyruvate to phosphoserine and of 3-hydroxy-2-oxo-4-phosphonooxybutanoate to phosphohydroxythreonine.</text>
</comment>
<comment type="catalytic activity">
    <reaction evidence="1">
        <text>O-phospho-L-serine + 2-oxoglutarate = 3-phosphooxypyruvate + L-glutamate</text>
        <dbReference type="Rhea" id="RHEA:14329"/>
        <dbReference type="ChEBI" id="CHEBI:16810"/>
        <dbReference type="ChEBI" id="CHEBI:18110"/>
        <dbReference type="ChEBI" id="CHEBI:29985"/>
        <dbReference type="ChEBI" id="CHEBI:57524"/>
        <dbReference type="EC" id="2.6.1.52"/>
    </reaction>
</comment>
<comment type="catalytic activity">
    <reaction evidence="1">
        <text>4-(phosphooxy)-L-threonine + 2-oxoglutarate = (R)-3-hydroxy-2-oxo-4-phosphooxybutanoate + L-glutamate</text>
        <dbReference type="Rhea" id="RHEA:16573"/>
        <dbReference type="ChEBI" id="CHEBI:16810"/>
        <dbReference type="ChEBI" id="CHEBI:29985"/>
        <dbReference type="ChEBI" id="CHEBI:58452"/>
        <dbReference type="ChEBI" id="CHEBI:58538"/>
        <dbReference type="EC" id="2.6.1.52"/>
    </reaction>
</comment>
<comment type="cofactor">
    <cofactor evidence="1">
        <name>pyridoxal 5'-phosphate</name>
        <dbReference type="ChEBI" id="CHEBI:597326"/>
    </cofactor>
    <text evidence="1">Binds 1 pyridoxal phosphate per subunit.</text>
</comment>
<comment type="pathway">
    <text evidence="1">Amino-acid biosynthesis; L-serine biosynthesis; L-serine from 3-phospho-D-glycerate: step 2/3.</text>
</comment>
<comment type="pathway">
    <text evidence="1">Cofactor biosynthesis; pyridoxine 5'-phosphate biosynthesis; pyridoxine 5'-phosphate from D-erythrose 4-phosphate: step 3/5.</text>
</comment>
<comment type="subunit">
    <text evidence="1">Homodimer.</text>
</comment>
<comment type="subcellular location">
    <subcellularLocation>
        <location evidence="1">Cytoplasm</location>
    </subcellularLocation>
</comment>
<comment type="similarity">
    <text evidence="1">Belongs to the class-V pyridoxal-phosphate-dependent aminotransferase family. SerC subfamily.</text>
</comment>
<sequence length="360" mass="40645">MSRVYNFSAGPAAIPEEVLFTVRDELLDWHGIGMSIAEVSHRGEEFIGVAEEAERDLRELLAVPESYHILFLQGGSRLQFAMVPMNLLANHKKAVYIDSGVWSNLAIREAKNYCDPHLATNAKELNYTGIPDQATWDMPNEAAYFYYVDNETVNGIEFPFIPDTDLTLVCDMSSNLLSRPFDVSRYGLIFACAQKNMGLAGLTIVIVHDDLLKRSPLPTTPSYLQYALHAKERSFINTPPTFAWYLAGLIFKWVKNQGGVAVLAERNQRKAAKLYKFIDKSNFFDNPINPTYRSRMNVIFRLADERLNSLFLKEATENGLANLKGHRLLGGMRASIYNAMTEEGVDALINFMGQFEKRHG</sequence>
<dbReference type="EC" id="2.6.1.52" evidence="1"/>
<dbReference type="EMBL" id="CP001019">
    <property type="protein sequence ID" value="ACJ18768.1"/>
    <property type="molecule type" value="Genomic_DNA"/>
</dbReference>
<dbReference type="RefSeq" id="WP_012570276.1">
    <property type="nucleotide sequence ID" value="NC_011527.1"/>
</dbReference>
<dbReference type="SMR" id="B6J1E0"/>
<dbReference type="KEGG" id="cbg:CbuG_1469"/>
<dbReference type="HOGENOM" id="CLU_034866_0_2_6"/>
<dbReference type="UniPathway" id="UPA00135">
    <property type="reaction ID" value="UER00197"/>
</dbReference>
<dbReference type="UniPathway" id="UPA00244">
    <property type="reaction ID" value="UER00311"/>
</dbReference>
<dbReference type="GO" id="GO:0005737">
    <property type="term" value="C:cytoplasm"/>
    <property type="evidence" value="ECO:0007669"/>
    <property type="project" value="UniProtKB-SubCell"/>
</dbReference>
<dbReference type="GO" id="GO:0004648">
    <property type="term" value="F:O-phospho-L-serine:2-oxoglutarate aminotransferase activity"/>
    <property type="evidence" value="ECO:0007669"/>
    <property type="project" value="UniProtKB-UniRule"/>
</dbReference>
<dbReference type="GO" id="GO:0030170">
    <property type="term" value="F:pyridoxal phosphate binding"/>
    <property type="evidence" value="ECO:0007669"/>
    <property type="project" value="UniProtKB-UniRule"/>
</dbReference>
<dbReference type="GO" id="GO:0006564">
    <property type="term" value="P:L-serine biosynthetic process"/>
    <property type="evidence" value="ECO:0007669"/>
    <property type="project" value="UniProtKB-UniRule"/>
</dbReference>
<dbReference type="GO" id="GO:0008615">
    <property type="term" value="P:pyridoxine biosynthetic process"/>
    <property type="evidence" value="ECO:0007669"/>
    <property type="project" value="UniProtKB-UniRule"/>
</dbReference>
<dbReference type="FunFam" id="3.40.640.10:FF:000010">
    <property type="entry name" value="Phosphoserine aminotransferase"/>
    <property type="match status" value="1"/>
</dbReference>
<dbReference type="FunFam" id="3.90.1150.10:FF:000006">
    <property type="entry name" value="Phosphoserine aminotransferase"/>
    <property type="match status" value="1"/>
</dbReference>
<dbReference type="Gene3D" id="3.90.1150.10">
    <property type="entry name" value="Aspartate Aminotransferase, domain 1"/>
    <property type="match status" value="1"/>
</dbReference>
<dbReference type="Gene3D" id="3.40.640.10">
    <property type="entry name" value="Type I PLP-dependent aspartate aminotransferase-like (Major domain)"/>
    <property type="match status" value="1"/>
</dbReference>
<dbReference type="HAMAP" id="MF_00160">
    <property type="entry name" value="SerC_aminotrans_5"/>
    <property type="match status" value="1"/>
</dbReference>
<dbReference type="InterPro" id="IPR000192">
    <property type="entry name" value="Aminotrans_V_dom"/>
</dbReference>
<dbReference type="InterPro" id="IPR020578">
    <property type="entry name" value="Aminotrans_V_PyrdxlP_BS"/>
</dbReference>
<dbReference type="InterPro" id="IPR022278">
    <property type="entry name" value="Pser_aminoTfrase"/>
</dbReference>
<dbReference type="InterPro" id="IPR015424">
    <property type="entry name" value="PyrdxlP-dep_Trfase"/>
</dbReference>
<dbReference type="InterPro" id="IPR015421">
    <property type="entry name" value="PyrdxlP-dep_Trfase_major"/>
</dbReference>
<dbReference type="InterPro" id="IPR015422">
    <property type="entry name" value="PyrdxlP-dep_Trfase_small"/>
</dbReference>
<dbReference type="NCBIfam" id="NF003764">
    <property type="entry name" value="PRK05355.1"/>
    <property type="match status" value="1"/>
</dbReference>
<dbReference type="NCBIfam" id="TIGR01364">
    <property type="entry name" value="serC_1"/>
    <property type="match status" value="1"/>
</dbReference>
<dbReference type="PANTHER" id="PTHR43247">
    <property type="entry name" value="PHOSPHOSERINE AMINOTRANSFERASE"/>
    <property type="match status" value="1"/>
</dbReference>
<dbReference type="PANTHER" id="PTHR43247:SF1">
    <property type="entry name" value="PHOSPHOSERINE AMINOTRANSFERASE"/>
    <property type="match status" value="1"/>
</dbReference>
<dbReference type="Pfam" id="PF00266">
    <property type="entry name" value="Aminotran_5"/>
    <property type="match status" value="1"/>
</dbReference>
<dbReference type="PIRSF" id="PIRSF000525">
    <property type="entry name" value="SerC"/>
    <property type="match status" value="1"/>
</dbReference>
<dbReference type="SUPFAM" id="SSF53383">
    <property type="entry name" value="PLP-dependent transferases"/>
    <property type="match status" value="1"/>
</dbReference>
<dbReference type="PROSITE" id="PS00595">
    <property type="entry name" value="AA_TRANSFER_CLASS_5"/>
    <property type="match status" value="1"/>
</dbReference>
<accession>B6J1E0</accession>